<organism>
    <name type="scientific">Aeromonas salmonicida (strain A449)</name>
    <dbReference type="NCBI Taxonomy" id="382245"/>
    <lineage>
        <taxon>Bacteria</taxon>
        <taxon>Pseudomonadati</taxon>
        <taxon>Pseudomonadota</taxon>
        <taxon>Gammaproteobacteria</taxon>
        <taxon>Aeromonadales</taxon>
        <taxon>Aeromonadaceae</taxon>
        <taxon>Aeromonas</taxon>
    </lineage>
</organism>
<accession>A4SHW1</accession>
<name>TMAR_AERS4</name>
<dbReference type="EMBL" id="CP000644">
    <property type="protein sequence ID" value="ABO88483.1"/>
    <property type="molecule type" value="Genomic_DNA"/>
</dbReference>
<dbReference type="SMR" id="A4SHW1"/>
<dbReference type="STRING" id="29491.GCA_000820065_03321"/>
<dbReference type="KEGG" id="asa:ASA_0299"/>
<dbReference type="eggNOG" id="COG2926">
    <property type="taxonomic scope" value="Bacteria"/>
</dbReference>
<dbReference type="HOGENOM" id="CLU_153146_0_0_6"/>
<dbReference type="Proteomes" id="UP000000225">
    <property type="component" value="Chromosome"/>
</dbReference>
<dbReference type="GO" id="GO:0005829">
    <property type="term" value="C:cytosol"/>
    <property type="evidence" value="ECO:0007669"/>
    <property type="project" value="TreeGrafter"/>
</dbReference>
<dbReference type="HAMAP" id="MF_00683">
    <property type="entry name" value="Pole_loc_TmaR"/>
    <property type="match status" value="1"/>
</dbReference>
<dbReference type="InterPro" id="IPR007458">
    <property type="entry name" value="DUF496"/>
</dbReference>
<dbReference type="InterPro" id="IPR053375">
    <property type="entry name" value="UPF0265"/>
</dbReference>
<dbReference type="NCBIfam" id="NF003844">
    <property type="entry name" value="PRK05423.1"/>
    <property type="match status" value="1"/>
</dbReference>
<dbReference type="NCBIfam" id="NF040881">
    <property type="entry name" value="PTS_reg_TmaR"/>
    <property type="match status" value="1"/>
</dbReference>
<dbReference type="PANTHER" id="PTHR39591">
    <property type="entry name" value="UPF0265 PROTEIN YEEX"/>
    <property type="match status" value="1"/>
</dbReference>
<dbReference type="PANTHER" id="PTHR39591:SF1">
    <property type="entry name" value="UPF0265 PROTEIN YEEX"/>
    <property type="match status" value="1"/>
</dbReference>
<dbReference type="Pfam" id="PF04363">
    <property type="entry name" value="DUF496"/>
    <property type="match status" value="1"/>
</dbReference>
<dbReference type="PIRSF" id="PIRSF028773">
    <property type="entry name" value="UCP028773"/>
    <property type="match status" value="1"/>
</dbReference>
<reference key="1">
    <citation type="journal article" date="2008" name="BMC Genomics">
        <title>The genome of Aeromonas salmonicida subsp. salmonicida A449: insights into the evolution of a fish pathogen.</title>
        <authorList>
            <person name="Reith M.E."/>
            <person name="Singh R.K."/>
            <person name="Curtis B."/>
            <person name="Boyd J.M."/>
            <person name="Bouevitch A."/>
            <person name="Kimball J."/>
            <person name="Munholland J."/>
            <person name="Murphy C."/>
            <person name="Sarty D."/>
            <person name="Williams J."/>
            <person name="Nash J.H."/>
            <person name="Johnson S.C."/>
            <person name="Brown L.L."/>
        </authorList>
    </citation>
    <scope>NUCLEOTIDE SEQUENCE [LARGE SCALE GENOMIC DNA]</scope>
    <source>
        <strain>A449</strain>
    </source>
</reference>
<proteinExistence type="inferred from homology"/>
<sequence>MEQVNKSTFSDVLEYVRMSRRQNKLKREIADNEKKIRDNQKRVLLLDNLSDYIKPGMSIDEVQAIIANMRTDYEERVDDHIIKNAELSKERKDLSAKLKAMSSSK</sequence>
<evidence type="ECO:0000255" key="1">
    <source>
        <dbReference type="HAMAP-Rule" id="MF_00683"/>
    </source>
</evidence>
<gene>
    <name evidence="1" type="primary">tmaR</name>
    <name type="ordered locus">ASA_0299</name>
</gene>
<protein>
    <recommendedName>
        <fullName evidence="1">Pole-localizer protein TmaR</fullName>
    </recommendedName>
</protein>
<comment type="function">
    <text evidence="1">Pole-localizer protein involved in the regulation of several cellular processes.</text>
</comment>
<comment type="subcellular location">
    <subcellularLocation>
        <location evidence="1">Cytoplasm</location>
    </subcellularLocation>
</comment>
<comment type="similarity">
    <text evidence="1">Belongs to the pole-localizer TmaR family.</text>
</comment>
<feature type="chain" id="PRO_1000044926" description="Pole-localizer protein TmaR">
    <location>
        <begin position="1"/>
        <end position="105"/>
    </location>
</feature>
<feature type="coiled-coil region" evidence="1">
    <location>
        <begin position="15"/>
        <end position="42"/>
    </location>
</feature>
<feature type="coiled-coil region" evidence="1">
    <location>
        <begin position="70"/>
        <end position="104"/>
    </location>
</feature>
<keyword id="KW-0175">Coiled coil</keyword>
<keyword id="KW-0963">Cytoplasm</keyword>